<organism>
    <name type="scientific">Bacillus subtilis (strain 168)</name>
    <dbReference type="NCBI Taxonomy" id="224308"/>
    <lineage>
        <taxon>Bacteria</taxon>
        <taxon>Bacillati</taxon>
        <taxon>Bacillota</taxon>
        <taxon>Bacilli</taxon>
        <taxon>Bacillales</taxon>
        <taxon>Bacillaceae</taxon>
        <taxon>Bacillus</taxon>
    </lineage>
</organism>
<comment type="function">
    <text evidence="7">Part of the ABC transporter complex YfmCDEF involved in citrate-dependent Fe(3+) import. Binds citrate-dependent Fe(3+) and delivers it to the surface of YfmDE (Probable).</text>
</comment>
<comment type="subunit">
    <text evidence="5">The complex is composed of one ATP-binding protein (YfmF), two transmembrane proteins (YfmD and YfmE) and a solute-binding protein (YfmC).</text>
</comment>
<comment type="subcellular location">
    <subcellularLocation>
        <location evidence="6">Cell membrane</location>
        <topology evidence="6">Lipid-anchor</topology>
    </subcellularLocation>
</comment>
<comment type="induction">
    <text evidence="4">Transcriptionally regulated by fur.</text>
</comment>
<comment type="similarity">
    <text evidence="5">Belongs to the bacterial solute-binding protein 8 family.</text>
</comment>
<protein>
    <recommendedName>
        <fullName>Fe(3+)-citrate-binding protein YfmC</fullName>
    </recommendedName>
    <alternativeName>
        <fullName>Ferric-citrate-binding protein</fullName>
    </alternativeName>
</protein>
<proteinExistence type="evidence at transcript level"/>
<sequence>MRTYSNKLIAIMSVLLLACLIVSGCSSSQNNNGSGKSESKDSRVIHDEEGKTTVSGTPKRVVVLELSFLDAVHNLGITPVGIADDNKKDMIKKLVGSSIDYTSVGTRSEPNLEVISSLKPDLIIADAERHKNIYKQLKKIAPTIELKSREATYDETIDSFTTIAKALNKEDEGKEKLAEHKKVINDLKAELPKDENRNIVLGVARADSFQLHTSSSYDGEIFKMLGFTHAVKSDNAYQEVSLEQLSKIDPDILFISANEGKTIVDEWKTNPLWKNLKAVKNGQVYDADRDTWTRFRGIKSSETSAKDVLKKVYNK</sequence>
<accession>O34348</accession>
<accession>Q79ET3</accession>
<gene>
    <name type="primary">yfmC</name>
    <name type="ordered locus">BSU07520</name>
</gene>
<keyword id="KW-1003">Cell membrane</keyword>
<keyword id="KW-0406">Ion transport</keyword>
<keyword id="KW-0408">Iron</keyword>
<keyword id="KW-0410">Iron transport</keyword>
<keyword id="KW-0449">Lipoprotein</keyword>
<keyword id="KW-0472">Membrane</keyword>
<keyword id="KW-0564">Palmitate</keyword>
<keyword id="KW-1185">Reference proteome</keyword>
<keyword id="KW-0732">Signal</keyword>
<keyword id="KW-0813">Transport</keyword>
<evidence type="ECO:0000255" key="1">
    <source>
        <dbReference type="PROSITE-ProRule" id="PRU00303"/>
    </source>
</evidence>
<evidence type="ECO:0000255" key="2">
    <source>
        <dbReference type="PROSITE-ProRule" id="PRU00344"/>
    </source>
</evidence>
<evidence type="ECO:0000256" key="3">
    <source>
        <dbReference type="SAM" id="MobiDB-lite"/>
    </source>
</evidence>
<evidence type="ECO:0000269" key="4">
    <source>
    </source>
</evidence>
<evidence type="ECO:0000305" key="5"/>
<evidence type="ECO:0000305" key="6">
    <source>
    </source>
</evidence>
<evidence type="ECO:0000305" key="7">
    <source>
    </source>
</evidence>
<feature type="signal peptide" evidence="1">
    <location>
        <begin position="1"/>
        <end position="18"/>
    </location>
</feature>
<feature type="chain" id="PRO_0000361675" description="Fe(3+)-citrate-binding protein YfmC">
    <location>
        <begin position="19"/>
        <end position="315"/>
    </location>
</feature>
<feature type="domain" description="Fe/B12 periplasmic-binding" evidence="2">
    <location>
        <begin position="60"/>
        <end position="315"/>
    </location>
</feature>
<feature type="region of interest" description="Disordered" evidence="3">
    <location>
        <begin position="27"/>
        <end position="52"/>
    </location>
</feature>
<feature type="compositionally biased region" description="Low complexity" evidence="3">
    <location>
        <begin position="27"/>
        <end position="36"/>
    </location>
</feature>
<feature type="compositionally biased region" description="Basic and acidic residues" evidence="3">
    <location>
        <begin position="37"/>
        <end position="51"/>
    </location>
</feature>
<feature type="lipid moiety-binding region" description="N-palmitoyl cysteine" evidence="1">
    <location>
        <position position="19"/>
    </location>
</feature>
<feature type="lipid moiety-binding region" description="S-diacylglycerol cysteine" evidence="1">
    <location>
        <position position="19"/>
    </location>
</feature>
<reference key="1">
    <citation type="journal article" date="1997" name="Gene">
        <title>Cloning and sequencing of a 35.7 kb in the 70 degree-73 degree region of the Bacillus subtilis genome reveal genes for a new two-component system, three spore germination proteins, an iron uptake system and a general stress response protein.</title>
        <authorList>
            <person name="Yamamoto H."/>
            <person name="Uchiyama S."/>
            <person name="Nugroho F.A."/>
            <person name="Sekiguchi J."/>
        </authorList>
    </citation>
    <scope>NUCLEOTIDE SEQUENCE [GENOMIC DNA]</scope>
    <source>
        <strain>168 / AC327</strain>
    </source>
</reference>
<reference key="2">
    <citation type="journal article" date="1997" name="Nature">
        <title>The complete genome sequence of the Gram-positive bacterium Bacillus subtilis.</title>
        <authorList>
            <person name="Kunst F."/>
            <person name="Ogasawara N."/>
            <person name="Moszer I."/>
            <person name="Albertini A.M."/>
            <person name="Alloni G."/>
            <person name="Azevedo V."/>
            <person name="Bertero M.G."/>
            <person name="Bessieres P."/>
            <person name="Bolotin A."/>
            <person name="Borchert S."/>
            <person name="Borriss R."/>
            <person name="Boursier L."/>
            <person name="Brans A."/>
            <person name="Braun M."/>
            <person name="Brignell S.C."/>
            <person name="Bron S."/>
            <person name="Brouillet S."/>
            <person name="Bruschi C.V."/>
            <person name="Caldwell B."/>
            <person name="Capuano V."/>
            <person name="Carter N.M."/>
            <person name="Choi S.-K."/>
            <person name="Codani J.-J."/>
            <person name="Connerton I.F."/>
            <person name="Cummings N.J."/>
            <person name="Daniel R.A."/>
            <person name="Denizot F."/>
            <person name="Devine K.M."/>
            <person name="Duesterhoeft A."/>
            <person name="Ehrlich S.D."/>
            <person name="Emmerson P.T."/>
            <person name="Entian K.-D."/>
            <person name="Errington J."/>
            <person name="Fabret C."/>
            <person name="Ferrari E."/>
            <person name="Foulger D."/>
            <person name="Fritz C."/>
            <person name="Fujita M."/>
            <person name="Fujita Y."/>
            <person name="Fuma S."/>
            <person name="Galizzi A."/>
            <person name="Galleron N."/>
            <person name="Ghim S.-Y."/>
            <person name="Glaser P."/>
            <person name="Goffeau A."/>
            <person name="Golightly E.J."/>
            <person name="Grandi G."/>
            <person name="Guiseppi G."/>
            <person name="Guy B.J."/>
            <person name="Haga K."/>
            <person name="Haiech J."/>
            <person name="Harwood C.R."/>
            <person name="Henaut A."/>
            <person name="Hilbert H."/>
            <person name="Holsappel S."/>
            <person name="Hosono S."/>
            <person name="Hullo M.-F."/>
            <person name="Itaya M."/>
            <person name="Jones L.-M."/>
            <person name="Joris B."/>
            <person name="Karamata D."/>
            <person name="Kasahara Y."/>
            <person name="Klaerr-Blanchard M."/>
            <person name="Klein C."/>
            <person name="Kobayashi Y."/>
            <person name="Koetter P."/>
            <person name="Koningstein G."/>
            <person name="Krogh S."/>
            <person name="Kumano M."/>
            <person name="Kurita K."/>
            <person name="Lapidus A."/>
            <person name="Lardinois S."/>
            <person name="Lauber J."/>
            <person name="Lazarevic V."/>
            <person name="Lee S.-M."/>
            <person name="Levine A."/>
            <person name="Liu H."/>
            <person name="Masuda S."/>
            <person name="Mauel C."/>
            <person name="Medigue C."/>
            <person name="Medina N."/>
            <person name="Mellado R.P."/>
            <person name="Mizuno M."/>
            <person name="Moestl D."/>
            <person name="Nakai S."/>
            <person name="Noback M."/>
            <person name="Noone D."/>
            <person name="O'Reilly M."/>
            <person name="Ogawa K."/>
            <person name="Ogiwara A."/>
            <person name="Oudega B."/>
            <person name="Park S.-H."/>
            <person name="Parro V."/>
            <person name="Pohl T.M."/>
            <person name="Portetelle D."/>
            <person name="Porwollik S."/>
            <person name="Prescott A.M."/>
            <person name="Presecan E."/>
            <person name="Pujic P."/>
            <person name="Purnelle B."/>
            <person name="Rapoport G."/>
            <person name="Rey M."/>
            <person name="Reynolds S."/>
            <person name="Rieger M."/>
            <person name="Rivolta C."/>
            <person name="Rocha E."/>
            <person name="Roche B."/>
            <person name="Rose M."/>
            <person name="Sadaie Y."/>
            <person name="Sato T."/>
            <person name="Scanlan E."/>
            <person name="Schleich S."/>
            <person name="Schroeter R."/>
            <person name="Scoffone F."/>
            <person name="Sekiguchi J."/>
            <person name="Sekowska A."/>
            <person name="Seror S.J."/>
            <person name="Serror P."/>
            <person name="Shin B.-S."/>
            <person name="Soldo B."/>
            <person name="Sorokin A."/>
            <person name="Tacconi E."/>
            <person name="Takagi T."/>
            <person name="Takahashi H."/>
            <person name="Takemaru K."/>
            <person name="Takeuchi M."/>
            <person name="Tamakoshi A."/>
            <person name="Tanaka T."/>
            <person name="Terpstra P."/>
            <person name="Tognoni A."/>
            <person name="Tosato V."/>
            <person name="Uchiyama S."/>
            <person name="Vandenbol M."/>
            <person name="Vannier F."/>
            <person name="Vassarotti A."/>
            <person name="Viari A."/>
            <person name="Wambutt R."/>
            <person name="Wedler E."/>
            <person name="Wedler H."/>
            <person name="Weitzenegger T."/>
            <person name="Winters P."/>
            <person name="Wipat A."/>
            <person name="Yamamoto H."/>
            <person name="Yamane K."/>
            <person name="Yasumoto K."/>
            <person name="Yata K."/>
            <person name="Yoshida K."/>
            <person name="Yoshikawa H.-F."/>
            <person name="Zumstein E."/>
            <person name="Yoshikawa H."/>
            <person name="Danchin A."/>
        </authorList>
    </citation>
    <scope>NUCLEOTIDE SEQUENCE [LARGE SCALE GENOMIC DNA]</scope>
    <source>
        <strain>168</strain>
    </source>
</reference>
<reference key="3">
    <citation type="journal article" date="2004" name="Electrophoresis">
        <title>Profiling and comprehensive expression analysis of ABC transporter solute-binding proteins of Bacillus subtilis membrane based on a proteomic approach.</title>
        <authorList>
            <person name="Bunai K."/>
            <person name="Ariga M."/>
            <person name="Inoue T."/>
            <person name="Nozaki M."/>
            <person name="Ogane S."/>
            <person name="Kakeshita H."/>
            <person name="Nemoto T."/>
            <person name="Nakanishi H."/>
            <person name="Yamane K."/>
        </authorList>
    </citation>
    <scope>SUBCELLULAR LOCATION</scope>
    <source>
        <strain>168</strain>
    </source>
</reference>
<reference key="4">
    <citation type="journal article" date="2006" name="J. Bacteriol.">
        <title>Role of the Fur regulon in iron transport in Bacillus subtilis.</title>
        <authorList>
            <person name="Ollinger J."/>
            <person name="Song K.-B."/>
            <person name="Antelmann H."/>
            <person name="Hecker M."/>
            <person name="Helmann J.D."/>
        </authorList>
    </citation>
    <scope>FUNCTION</scope>
    <scope>INDUCTION</scope>
</reference>
<dbReference type="EMBL" id="D86417">
    <property type="protein sequence ID" value="BAA22317.1"/>
    <property type="molecule type" value="Genomic_DNA"/>
</dbReference>
<dbReference type="EMBL" id="AL009126">
    <property type="protein sequence ID" value="CAB12581.1"/>
    <property type="molecule type" value="Genomic_DNA"/>
</dbReference>
<dbReference type="PIR" id="B69812">
    <property type="entry name" value="B69812"/>
</dbReference>
<dbReference type="RefSeq" id="WP_003243996.1">
    <property type="nucleotide sequence ID" value="NZ_OZ025638.1"/>
</dbReference>
<dbReference type="SMR" id="O34348"/>
<dbReference type="FunCoup" id="O34348">
    <property type="interactions" value="180"/>
</dbReference>
<dbReference type="STRING" id="224308.BSU07520"/>
<dbReference type="jPOST" id="O34348"/>
<dbReference type="PaxDb" id="224308-BSU07520"/>
<dbReference type="EnsemblBacteria" id="CAB12581">
    <property type="protein sequence ID" value="CAB12581"/>
    <property type="gene ID" value="BSU_07520"/>
</dbReference>
<dbReference type="GeneID" id="936114"/>
<dbReference type="KEGG" id="bsu:BSU07520"/>
<dbReference type="PATRIC" id="fig|224308.179.peg.818"/>
<dbReference type="eggNOG" id="COG4594">
    <property type="taxonomic scope" value="Bacteria"/>
</dbReference>
<dbReference type="InParanoid" id="O34348"/>
<dbReference type="OrthoDB" id="9793175at2"/>
<dbReference type="PhylomeDB" id="O34348"/>
<dbReference type="BioCyc" id="BSUB:BSU07520-MONOMER"/>
<dbReference type="Proteomes" id="UP000001570">
    <property type="component" value="Chromosome"/>
</dbReference>
<dbReference type="GO" id="GO:0030288">
    <property type="term" value="C:outer membrane-bounded periplasmic space"/>
    <property type="evidence" value="ECO:0000318"/>
    <property type="project" value="GO_Central"/>
</dbReference>
<dbReference type="GO" id="GO:0005886">
    <property type="term" value="C:plasma membrane"/>
    <property type="evidence" value="ECO:0007669"/>
    <property type="project" value="UniProtKB-SubCell"/>
</dbReference>
<dbReference type="GO" id="GO:1901678">
    <property type="term" value="P:iron coordination entity transport"/>
    <property type="evidence" value="ECO:0007669"/>
    <property type="project" value="UniProtKB-ARBA"/>
</dbReference>
<dbReference type="CDD" id="cd01146">
    <property type="entry name" value="FhuD"/>
    <property type="match status" value="1"/>
</dbReference>
<dbReference type="FunFam" id="3.40.50.1980:FF:000003">
    <property type="entry name" value="Iron ABC transporter substrate-binding protein"/>
    <property type="match status" value="1"/>
</dbReference>
<dbReference type="Gene3D" id="3.40.50.1980">
    <property type="entry name" value="Nitrogenase molybdenum iron protein domain"/>
    <property type="match status" value="2"/>
</dbReference>
<dbReference type="InterPro" id="IPR002491">
    <property type="entry name" value="ABC_transptr_periplasmic_BD"/>
</dbReference>
<dbReference type="InterPro" id="IPR051313">
    <property type="entry name" value="Bact_iron-sidero_bind"/>
</dbReference>
<dbReference type="NCBIfam" id="NF008501">
    <property type="entry name" value="PRK11411.1"/>
    <property type="match status" value="1"/>
</dbReference>
<dbReference type="PANTHER" id="PTHR30532:SF29">
    <property type="entry name" value="FE(3+) DICITRATE-BINDING PERIPLASMIC PROTEIN"/>
    <property type="match status" value="1"/>
</dbReference>
<dbReference type="PANTHER" id="PTHR30532">
    <property type="entry name" value="IRON III DICITRATE-BINDING PERIPLASMIC PROTEIN"/>
    <property type="match status" value="1"/>
</dbReference>
<dbReference type="Pfam" id="PF01497">
    <property type="entry name" value="Peripla_BP_2"/>
    <property type="match status" value="1"/>
</dbReference>
<dbReference type="SUPFAM" id="SSF53807">
    <property type="entry name" value="Helical backbone' metal receptor"/>
    <property type="match status" value="1"/>
</dbReference>
<dbReference type="PROSITE" id="PS50983">
    <property type="entry name" value="FE_B12_PBP"/>
    <property type="match status" value="1"/>
</dbReference>
<dbReference type="PROSITE" id="PS51257">
    <property type="entry name" value="PROKAR_LIPOPROTEIN"/>
    <property type="match status" value="1"/>
</dbReference>
<name>YFMC_BACSU</name>